<proteinExistence type="evidence at protein level"/>
<comment type="function">
    <text evidence="1">May play a role in the integrity of hemidesmosome and the attachment of basal keratinocytes to the underlying basement membrane.</text>
</comment>
<comment type="function">
    <text evidence="1">The 120 kDa linear IgA disease antigen homolog is an anchoring filament component involved in dermal-epidermal cohesion.</text>
</comment>
<comment type="subunit">
    <text evidence="1">Homotrimers of alpha 1(XVII)chains. Interacts (via cytoplasmic region) with ITGB4 (via cytoplasmic region). Interacts (via cytoplasmic region) with DST (via N-terminus). Interacts (via N-terminus) with PLEC. Interacts (via cytoplasmic region) with DSP (By similarity).</text>
</comment>
<comment type="interaction">
    <interactant intactId="EBI-6251005">
        <id>Q07563</id>
    </interactant>
    <interactant intactId="EBI-986345">
        <id>P08246</id>
        <label>ELANE</label>
    </interactant>
    <organismsDiffer>true</organismsDiffer>
    <experiments>2</experiments>
</comment>
<comment type="subcellular location">
    <subcellularLocation>
        <location>Cell junction</location>
        <location>Hemidesmosome</location>
    </subcellularLocation>
    <subcellularLocation>
        <location>Membrane</location>
        <topology>Single-pass type II membrane protein</topology>
    </subcellularLocation>
    <text evidence="1">Localized along the plasma membrane of the hemidesmosome.</text>
</comment>
<comment type="subcellular location">
    <molecule>120 kDa linear IgA disease antigen homolog</molecule>
    <subcellularLocation>
        <location evidence="1">Secreted</location>
        <location evidence="1">Extracellular space</location>
        <location evidence="1">Extracellular matrix</location>
        <location evidence="1">Basement membrane</location>
    </subcellularLocation>
</comment>
<comment type="alternative products">
    <event type="alternative splicing"/>
    <isoform>
        <id>Q07563-1</id>
        <name>1</name>
        <sequence type="displayed"/>
    </isoform>
    <isoform>
        <id>Q07563-2</id>
        <name>2</name>
        <sequence type="described" ref="VSP_009362"/>
    </isoform>
</comment>
<comment type="PTM">
    <text evidence="1">The intracellular/endo domain is disulfide-linked.</text>
</comment>
<comment type="PTM">
    <text>Prolines at the third position of the tripeptide repeating unit (G-X-Y) are hydroxylated in some or all of the chains.</text>
</comment>
<comment type="PTM">
    <text evidence="1">The ectodomain is shedded from the surface of keratinocytes resulting in a 120-kDa soluble form, also named as 120 kDa linear IgA disease antigen homolog. The shedding is mediated by membrane-bound metalloproteases. This cleavage is inhibited by phosphorylation at Ser-551 (By similarity).</text>
</comment>
<evidence type="ECO:0000250" key="1"/>
<evidence type="ECO:0000250" key="2">
    <source>
        <dbReference type="UniProtKB" id="Q9UMD9"/>
    </source>
</evidence>
<evidence type="ECO:0000255" key="3"/>
<evidence type="ECO:0000256" key="4">
    <source>
        <dbReference type="SAM" id="MobiDB-lite"/>
    </source>
</evidence>
<evidence type="ECO:0000303" key="5">
    <source>
    </source>
</evidence>
<evidence type="ECO:0000305" key="6"/>
<accession>Q07563</accession>
<accession>Q08AT3</accession>
<accession>Q3UXX1</accession>
<accession>Q99LK8</accession>
<keyword id="KW-0025">Alternative splicing</keyword>
<keyword id="KW-0084">Basement membrane</keyword>
<keyword id="KW-0965">Cell junction</keyword>
<keyword id="KW-0176">Collagen</keyword>
<keyword id="KW-1015">Disulfide bond</keyword>
<keyword id="KW-0272">Extracellular matrix</keyword>
<keyword id="KW-0325">Glycoprotein</keyword>
<keyword id="KW-0379">Hydroxylation</keyword>
<keyword id="KW-0472">Membrane</keyword>
<keyword id="KW-0597">Phosphoprotein</keyword>
<keyword id="KW-1185">Reference proteome</keyword>
<keyword id="KW-0677">Repeat</keyword>
<keyword id="KW-0964">Secreted</keyword>
<keyword id="KW-0735">Signal-anchor</keyword>
<keyword id="KW-0812">Transmembrane</keyword>
<keyword id="KW-1133">Transmembrane helix</keyword>
<reference key="1">
    <citation type="journal article" date="1993" name="J. Biol. Chem.">
        <title>Cloning of type XVII collagen: complementary and genomic DNA sequences of mouse 180-kDa bullous pemphigoid antigen (BPAG2) predict an interrupted collagenous domain, a transmembrane segment, and unusual features in the 5'-end of the gene and the 3' -.</title>
        <authorList>
            <person name="Li K."/>
            <person name="Tamai K."/>
            <person name="Tan E.M.L."/>
            <person name="Uitto J."/>
        </authorList>
    </citation>
    <scope>NUCLEOTIDE SEQUENCE [MRNA] (ISOFORM 2)</scope>
    <source>
        <strain>BALB/cJ</strain>
    </source>
</reference>
<reference key="2">
    <citation type="journal article" date="2009" name="PLoS Biol.">
        <title>Lineage-specific biology revealed by a finished genome assembly of the mouse.</title>
        <authorList>
            <person name="Church D.M."/>
            <person name="Goodstadt L."/>
            <person name="Hillier L.W."/>
            <person name="Zody M.C."/>
            <person name="Goldstein S."/>
            <person name="She X."/>
            <person name="Bult C.J."/>
            <person name="Agarwala R."/>
            <person name="Cherry J.L."/>
            <person name="DiCuccio M."/>
            <person name="Hlavina W."/>
            <person name="Kapustin Y."/>
            <person name="Meric P."/>
            <person name="Maglott D."/>
            <person name="Birtle Z."/>
            <person name="Marques A.C."/>
            <person name="Graves T."/>
            <person name="Zhou S."/>
            <person name="Teague B."/>
            <person name="Potamousis K."/>
            <person name="Churas C."/>
            <person name="Place M."/>
            <person name="Herschleb J."/>
            <person name="Runnheim R."/>
            <person name="Forrest D."/>
            <person name="Amos-Landgraf J."/>
            <person name="Schwartz D.C."/>
            <person name="Cheng Z."/>
            <person name="Lindblad-Toh K."/>
            <person name="Eichler E.E."/>
            <person name="Ponting C.P."/>
        </authorList>
    </citation>
    <scope>NUCLEOTIDE SEQUENCE [LARGE SCALE GENOMIC DNA]</scope>
    <source>
        <strain>C57BL/6J</strain>
    </source>
</reference>
<reference key="3">
    <citation type="journal article" date="2004" name="Genome Res.">
        <title>The status, quality, and expansion of the NIH full-length cDNA project: the Mammalian Gene Collection (MGC).</title>
        <authorList>
            <consortium name="The MGC Project Team"/>
        </authorList>
    </citation>
    <scope>NUCLEOTIDE SEQUENCE [LARGE SCALE MRNA] (ISOFORM 1)</scope>
    <source>
        <tissue>Mammary gland</tissue>
    </source>
</reference>
<reference key="4">
    <citation type="journal article" date="2005" name="Science">
        <title>The transcriptional landscape of the mammalian genome.</title>
        <authorList>
            <person name="Carninci P."/>
            <person name="Kasukawa T."/>
            <person name="Katayama S."/>
            <person name="Gough J."/>
            <person name="Frith M.C."/>
            <person name="Maeda N."/>
            <person name="Oyama R."/>
            <person name="Ravasi T."/>
            <person name="Lenhard B."/>
            <person name="Wells C."/>
            <person name="Kodzius R."/>
            <person name="Shimokawa K."/>
            <person name="Bajic V.B."/>
            <person name="Brenner S.E."/>
            <person name="Batalov S."/>
            <person name="Forrest A.R."/>
            <person name="Zavolan M."/>
            <person name="Davis M.J."/>
            <person name="Wilming L.G."/>
            <person name="Aidinis V."/>
            <person name="Allen J.E."/>
            <person name="Ambesi-Impiombato A."/>
            <person name="Apweiler R."/>
            <person name="Aturaliya R.N."/>
            <person name="Bailey T.L."/>
            <person name="Bansal M."/>
            <person name="Baxter L."/>
            <person name="Beisel K.W."/>
            <person name="Bersano T."/>
            <person name="Bono H."/>
            <person name="Chalk A.M."/>
            <person name="Chiu K.P."/>
            <person name="Choudhary V."/>
            <person name="Christoffels A."/>
            <person name="Clutterbuck D.R."/>
            <person name="Crowe M.L."/>
            <person name="Dalla E."/>
            <person name="Dalrymple B.P."/>
            <person name="de Bono B."/>
            <person name="Della Gatta G."/>
            <person name="di Bernardo D."/>
            <person name="Down T."/>
            <person name="Engstrom P."/>
            <person name="Fagiolini M."/>
            <person name="Faulkner G."/>
            <person name="Fletcher C.F."/>
            <person name="Fukushima T."/>
            <person name="Furuno M."/>
            <person name="Futaki S."/>
            <person name="Gariboldi M."/>
            <person name="Georgii-Hemming P."/>
            <person name="Gingeras T.R."/>
            <person name="Gojobori T."/>
            <person name="Green R.E."/>
            <person name="Gustincich S."/>
            <person name="Harbers M."/>
            <person name="Hayashi Y."/>
            <person name="Hensch T.K."/>
            <person name="Hirokawa N."/>
            <person name="Hill D."/>
            <person name="Huminiecki L."/>
            <person name="Iacono M."/>
            <person name="Ikeo K."/>
            <person name="Iwama A."/>
            <person name="Ishikawa T."/>
            <person name="Jakt M."/>
            <person name="Kanapin A."/>
            <person name="Katoh M."/>
            <person name="Kawasawa Y."/>
            <person name="Kelso J."/>
            <person name="Kitamura H."/>
            <person name="Kitano H."/>
            <person name="Kollias G."/>
            <person name="Krishnan S.P."/>
            <person name="Kruger A."/>
            <person name="Kummerfeld S.K."/>
            <person name="Kurochkin I.V."/>
            <person name="Lareau L.F."/>
            <person name="Lazarevic D."/>
            <person name="Lipovich L."/>
            <person name="Liu J."/>
            <person name="Liuni S."/>
            <person name="McWilliam S."/>
            <person name="Madan Babu M."/>
            <person name="Madera M."/>
            <person name="Marchionni L."/>
            <person name="Matsuda H."/>
            <person name="Matsuzawa S."/>
            <person name="Miki H."/>
            <person name="Mignone F."/>
            <person name="Miyake S."/>
            <person name="Morris K."/>
            <person name="Mottagui-Tabar S."/>
            <person name="Mulder N."/>
            <person name="Nakano N."/>
            <person name="Nakauchi H."/>
            <person name="Ng P."/>
            <person name="Nilsson R."/>
            <person name="Nishiguchi S."/>
            <person name="Nishikawa S."/>
            <person name="Nori F."/>
            <person name="Ohara O."/>
            <person name="Okazaki Y."/>
            <person name="Orlando V."/>
            <person name="Pang K.C."/>
            <person name="Pavan W.J."/>
            <person name="Pavesi G."/>
            <person name="Pesole G."/>
            <person name="Petrovsky N."/>
            <person name="Piazza S."/>
            <person name="Reed J."/>
            <person name="Reid J.F."/>
            <person name="Ring B.Z."/>
            <person name="Ringwald M."/>
            <person name="Rost B."/>
            <person name="Ruan Y."/>
            <person name="Salzberg S.L."/>
            <person name="Sandelin A."/>
            <person name="Schneider C."/>
            <person name="Schoenbach C."/>
            <person name="Sekiguchi K."/>
            <person name="Semple C.A."/>
            <person name="Seno S."/>
            <person name="Sessa L."/>
            <person name="Sheng Y."/>
            <person name="Shibata Y."/>
            <person name="Shimada H."/>
            <person name="Shimada K."/>
            <person name="Silva D."/>
            <person name="Sinclair B."/>
            <person name="Sperling S."/>
            <person name="Stupka E."/>
            <person name="Sugiura K."/>
            <person name="Sultana R."/>
            <person name="Takenaka Y."/>
            <person name="Taki K."/>
            <person name="Tammoja K."/>
            <person name="Tan S.L."/>
            <person name="Tang S."/>
            <person name="Taylor M.S."/>
            <person name="Tegner J."/>
            <person name="Teichmann S.A."/>
            <person name="Ueda H.R."/>
            <person name="van Nimwegen E."/>
            <person name="Verardo R."/>
            <person name="Wei C.L."/>
            <person name="Yagi K."/>
            <person name="Yamanishi H."/>
            <person name="Zabarovsky E."/>
            <person name="Zhu S."/>
            <person name="Zimmer A."/>
            <person name="Hide W."/>
            <person name="Bult C."/>
            <person name="Grimmond S.M."/>
            <person name="Teasdale R.D."/>
            <person name="Liu E.T."/>
            <person name="Brusic V."/>
            <person name="Quackenbush J."/>
            <person name="Wahlestedt C."/>
            <person name="Mattick J.S."/>
            <person name="Hume D.A."/>
            <person name="Kai C."/>
            <person name="Sasaki D."/>
            <person name="Tomaru Y."/>
            <person name="Fukuda S."/>
            <person name="Kanamori-Katayama M."/>
            <person name="Suzuki M."/>
            <person name="Aoki J."/>
            <person name="Arakawa T."/>
            <person name="Iida J."/>
            <person name="Imamura K."/>
            <person name="Itoh M."/>
            <person name="Kato T."/>
            <person name="Kawaji H."/>
            <person name="Kawagashira N."/>
            <person name="Kawashima T."/>
            <person name="Kojima M."/>
            <person name="Kondo S."/>
            <person name="Konno H."/>
            <person name="Nakano K."/>
            <person name="Ninomiya N."/>
            <person name="Nishio T."/>
            <person name="Okada M."/>
            <person name="Plessy C."/>
            <person name="Shibata K."/>
            <person name="Shiraki T."/>
            <person name="Suzuki S."/>
            <person name="Tagami M."/>
            <person name="Waki K."/>
            <person name="Watahiki A."/>
            <person name="Okamura-Oho Y."/>
            <person name="Suzuki H."/>
            <person name="Kawai J."/>
            <person name="Hayashizaki Y."/>
        </authorList>
    </citation>
    <scope>NUCLEOTIDE SEQUENCE [LARGE SCALE MRNA] OF 1357-1470</scope>
    <source>
        <strain>C57BL/6J</strain>
        <tissue>Cerebellum</tissue>
    </source>
</reference>
<name>COHA1_MOUSE</name>
<dbReference type="EMBL" id="L08407">
    <property type="protein sequence ID" value="AAA37443.1"/>
    <property type="molecule type" value="mRNA"/>
</dbReference>
<dbReference type="EMBL" id="AC131719">
    <property type="status" value="NOT_ANNOTATED_CDS"/>
    <property type="molecule type" value="Genomic_DNA"/>
</dbReference>
<dbReference type="EMBL" id="BC003208">
    <property type="protein sequence ID" value="AAH03208.1"/>
    <property type="molecule type" value="mRNA"/>
</dbReference>
<dbReference type="EMBL" id="BC125031">
    <property type="protein sequence ID" value="AAI25032.1"/>
    <property type="molecule type" value="mRNA"/>
</dbReference>
<dbReference type="EMBL" id="BC125032">
    <property type="protein sequence ID" value="AAI25033.1"/>
    <property type="molecule type" value="mRNA"/>
</dbReference>
<dbReference type="EMBL" id="AK135150">
    <property type="protein sequence ID" value="BAE22442.1"/>
    <property type="molecule type" value="mRNA"/>
</dbReference>
<dbReference type="CCDS" id="CCDS38018.1">
    <molecule id="Q07563-2"/>
</dbReference>
<dbReference type="CCDS" id="CCDS70959.1">
    <molecule id="Q07563-1"/>
</dbReference>
<dbReference type="PIR" id="A46053">
    <property type="entry name" value="A46053"/>
</dbReference>
<dbReference type="RefSeq" id="NP_001277754.1">
    <molecule id="Q07563-1"/>
    <property type="nucleotide sequence ID" value="NM_001290825.2"/>
</dbReference>
<dbReference type="RefSeq" id="NP_031758.2">
    <molecule id="Q07563-2"/>
    <property type="nucleotide sequence ID" value="NM_007732.3"/>
</dbReference>
<dbReference type="ComplexPortal" id="CPX-2995">
    <property type="entry name" value="Collagen type XVII trimer"/>
</dbReference>
<dbReference type="FunCoup" id="Q07563">
    <property type="interactions" value="156"/>
</dbReference>
<dbReference type="IntAct" id="Q07563">
    <property type="interactions" value="1"/>
</dbReference>
<dbReference type="STRING" id="10090.ENSMUSP00000026045"/>
<dbReference type="GlyCosmos" id="Q07563">
    <property type="glycosylation" value="2 sites, No reported glycans"/>
</dbReference>
<dbReference type="GlyGen" id="Q07563">
    <property type="glycosylation" value="5 sites"/>
</dbReference>
<dbReference type="iPTMnet" id="Q07563"/>
<dbReference type="PhosphoSitePlus" id="Q07563"/>
<dbReference type="PaxDb" id="10090-ENSMUSP00000084141"/>
<dbReference type="ProteomicsDB" id="283423">
    <molecule id="Q07563-1"/>
</dbReference>
<dbReference type="ProteomicsDB" id="283424">
    <molecule id="Q07563-2"/>
</dbReference>
<dbReference type="ABCD" id="Q07563">
    <property type="antibodies" value="24 sequenced antibodies"/>
</dbReference>
<dbReference type="Antibodypedia" id="18201">
    <property type="antibodies" value="234 antibodies from 29 providers"/>
</dbReference>
<dbReference type="DNASU" id="12821"/>
<dbReference type="Ensembl" id="ENSMUST00000026045.14">
    <molecule id="Q07563-1"/>
    <property type="protein sequence ID" value="ENSMUSP00000026045.8"/>
    <property type="gene ID" value="ENSMUSG00000025064.16"/>
</dbReference>
<dbReference type="Ensembl" id="ENSMUST00000086923.6">
    <molecule id="Q07563-2"/>
    <property type="protein sequence ID" value="ENSMUSP00000084141.6"/>
    <property type="gene ID" value="ENSMUSG00000025064.16"/>
</dbReference>
<dbReference type="GeneID" id="12821"/>
<dbReference type="KEGG" id="mmu:12821"/>
<dbReference type="UCSC" id="uc008hvi.2">
    <molecule id="Q07563-2"/>
    <property type="organism name" value="mouse"/>
</dbReference>
<dbReference type="UCSC" id="uc008hvj.2">
    <molecule id="Q07563-1"/>
    <property type="organism name" value="mouse"/>
</dbReference>
<dbReference type="AGR" id="MGI:88450"/>
<dbReference type="CTD" id="1308"/>
<dbReference type="MGI" id="MGI:88450">
    <property type="gene designation" value="Col17a1"/>
</dbReference>
<dbReference type="VEuPathDB" id="HostDB:ENSMUSG00000025064"/>
<dbReference type="eggNOG" id="KOG3544">
    <property type="taxonomic scope" value="Eukaryota"/>
</dbReference>
<dbReference type="GeneTree" id="ENSGT00940000161242"/>
<dbReference type="HOGENOM" id="CLU_004285_0_0_1"/>
<dbReference type="InParanoid" id="Q07563"/>
<dbReference type="OMA" id="YRQTQSP"/>
<dbReference type="OrthoDB" id="9950082at2759"/>
<dbReference type="PhylomeDB" id="Q07563"/>
<dbReference type="TreeFam" id="TF332289"/>
<dbReference type="Reactome" id="R-MMU-1650814">
    <property type="pathway name" value="Collagen biosynthesis and modifying enzymes"/>
</dbReference>
<dbReference type="Reactome" id="R-MMU-198933">
    <property type="pathway name" value="Immunoregulatory interactions between a Lymphoid and a non-Lymphoid cell"/>
</dbReference>
<dbReference type="Reactome" id="R-MMU-446107">
    <property type="pathway name" value="Type I hemidesmosome assembly"/>
</dbReference>
<dbReference type="Reactome" id="R-MMU-8948216">
    <property type="pathway name" value="Collagen chain trimerization"/>
</dbReference>
<dbReference type="BioGRID-ORCS" id="12821">
    <property type="hits" value="3 hits in 79 CRISPR screens"/>
</dbReference>
<dbReference type="ChiTaRS" id="Col17a1">
    <property type="organism name" value="mouse"/>
</dbReference>
<dbReference type="PRO" id="PR:Q07563"/>
<dbReference type="Proteomes" id="UP000000589">
    <property type="component" value="Chromosome 19"/>
</dbReference>
<dbReference type="RNAct" id="Q07563">
    <property type="molecule type" value="protein"/>
</dbReference>
<dbReference type="Bgee" id="ENSMUSG00000025064">
    <property type="expression patterns" value="Expressed in substantia propria of cornea and 104 other cell types or tissues"/>
</dbReference>
<dbReference type="GO" id="GO:0005604">
    <property type="term" value="C:basement membrane"/>
    <property type="evidence" value="ECO:0007669"/>
    <property type="project" value="UniProtKB-SubCell"/>
</dbReference>
<dbReference type="GO" id="GO:0005581">
    <property type="term" value="C:collagen trimer"/>
    <property type="evidence" value="ECO:0007669"/>
    <property type="project" value="UniProtKB-KW"/>
</dbReference>
<dbReference type="GO" id="GO:0005576">
    <property type="term" value="C:extracellular region"/>
    <property type="evidence" value="ECO:0007669"/>
    <property type="project" value="UniProtKB-KW"/>
</dbReference>
<dbReference type="GO" id="GO:0030056">
    <property type="term" value="C:hemidesmosome"/>
    <property type="evidence" value="ECO:0000314"/>
    <property type="project" value="MGI"/>
</dbReference>
<dbReference type="GO" id="GO:0016020">
    <property type="term" value="C:membrane"/>
    <property type="evidence" value="ECO:0007669"/>
    <property type="project" value="UniProtKB-SubCell"/>
</dbReference>
<dbReference type="GO" id="GO:0031581">
    <property type="term" value="P:hemidesmosome assembly"/>
    <property type="evidence" value="ECO:0000250"/>
    <property type="project" value="UniProtKB"/>
</dbReference>
<dbReference type="FunFam" id="1.20.5.320:FF:000003">
    <property type="entry name" value="Collagen, type XVII, alpha 1"/>
    <property type="match status" value="1"/>
</dbReference>
<dbReference type="Gene3D" id="1.20.5.320">
    <property type="entry name" value="6-Phosphogluconate Dehydrogenase, domain 3"/>
    <property type="match status" value="2"/>
</dbReference>
<dbReference type="InterPro" id="IPR008160">
    <property type="entry name" value="Collagen"/>
</dbReference>
<dbReference type="InterPro" id="IPR050149">
    <property type="entry name" value="Collagen_superfamily"/>
</dbReference>
<dbReference type="PANTHER" id="PTHR24023:SF1112">
    <property type="entry name" value="COL_CUTICLE_N DOMAIN-CONTAINING PROTEIN-RELATED"/>
    <property type="match status" value="1"/>
</dbReference>
<dbReference type="PANTHER" id="PTHR24023">
    <property type="entry name" value="COLLAGEN ALPHA"/>
    <property type="match status" value="1"/>
</dbReference>
<dbReference type="Pfam" id="PF01391">
    <property type="entry name" value="Collagen"/>
    <property type="match status" value="5"/>
</dbReference>
<sequence length="1470" mass="147975">MDVTKKSKRDGTEVTERIVTETVTTRLTSLPPKGSTSNGYAKTGSLGGGSRLEKQSLTHGSSGYINSSGSIRGNASTSSYRRTHSPASTLPNSPGSTFERKAHMTRHGTYEGSSSGNSSPEYPRKELASSSTRGRSQTRESEIRVRLQSASPSTRWTELDEVKRLLKGSRSASASPTRNTSNTLPIPKKGTVETKTVTASSHSVSGTYDSAILDTNFPPHMWSSTLPAGSSLGTYQNNITAQSTSLLNTNAYSTGSVFGVPNNMASCSPTLHPGLSSCSSVFGMQNNLAPSSSVLSHGTTTASTAYGAKKNVPQPPTVTSTGVSTSATCTTSVQSDDLLHKDCKFLILEKDNTPAKKEMELLIMTKDSGKVFTASPATISSTSFSEDTLKKEKQAAYAADTCLKADVNGDLNTVSTKSKMTSAENHGYDRGGGGGRGKGGGAGGGGGGGGASGGGGAWGAAPAWCPCGSCCSWWKWLLGLLLTWLLLLGLLFGLIALAEEVRKLKARVEELEKTKVLYHDVQMDKSNRDRLQAEAPSLGPGLGKAELDGYSQEAIWLFVRNKLMTEQENGNLRGSPGPKGDMGSQGPKGDRGLPGTPGIPGPLGHPGPEGPKGQKGSIGDPGMEGPIGQRGLAGPMGPRGEPGPPGSGEKGDRGIAGEQGPQGLPGVPGPPGLRGHSGSPGPQGPPGAVGPQGLRGDVGLPGVKGDKGLMGPPGPKGDQGEKGPRGLTGEPGIRGLPGAVGEPGAKGAMGPAGADGQQGSRGEQGLTGMPGTRGPPGPAGDPGKPGLTGPQGPQGLPGSPGRPGTKGEPGAPGRVMTSEGSSTITVPGPPGPPGAMGPPGPPGTPGPAGPAGLPGQQGPRGEPGLAGDSFLSSGSSISEVLSAQGVDLRGPPGPPGPRGPPGPSIPGPPGPRGPPGEGVPGPPGPPGSFLTDSETFFTGPPGPPGPPGPKGDQGDPGVPGTPGISGGLSHGASSSTLYMQGPPGPPGPPGPPGSLSSSGQDIQHYIAEYMQSDNIRTYLSGVQGPPGPPGPPGPVITITGETFDYSQLASQVVSYLRSSGYGAGLSSASSSEDILAMLRRNDVWQYLRQNLVGPPGPPGPPGVSGDGSLLSLDYGELSRHILNYMSSSGISFGHPGPPGPPGLPGTSYEELLTMLRGSDYRNIIGPPGPPGPPGMPGNAWSSISVEDLSSYLHTAGLSSIPGPPGPPGPPGPRGPPGVSAALSTYAAENSDNFRSELISYLTSPDVRSFIVGPPGPPGPQGPPGDGHLRENYNWSSNSSARRGTSYSSSTGTGGTNGGSLGEGGAYGAGDGGPYGTDIGPGGGYGAAAGGGIYGTNGDSFRDGFTGDLDYNKLAVRVSESMQRQGLLQGMAYTVQGPPGPQGPPGISRVFSAYSNVTQDLMDFFQTYGTIPGPPGQKGDVGTPGPKGDRGPAGPRGPPGPPGPRGNKGEKGDKGDQVYTGRRKRSIAIKP</sequence>
<organism>
    <name type="scientific">Mus musculus</name>
    <name type="common">Mouse</name>
    <dbReference type="NCBI Taxonomy" id="10090"/>
    <lineage>
        <taxon>Eukaryota</taxon>
        <taxon>Metazoa</taxon>
        <taxon>Chordata</taxon>
        <taxon>Craniata</taxon>
        <taxon>Vertebrata</taxon>
        <taxon>Euteleostomi</taxon>
        <taxon>Mammalia</taxon>
        <taxon>Eutheria</taxon>
        <taxon>Euarchontoglires</taxon>
        <taxon>Glires</taxon>
        <taxon>Rodentia</taxon>
        <taxon>Myomorpha</taxon>
        <taxon>Muroidea</taxon>
        <taxon>Muridae</taxon>
        <taxon>Murinae</taxon>
        <taxon>Mus</taxon>
        <taxon>Mus</taxon>
    </lineage>
</organism>
<gene>
    <name type="primary">Col17a1</name>
    <name type="synonym">Bp180</name>
    <name type="synonym">Bpag2</name>
</gene>
<protein>
    <recommendedName>
        <fullName>Collagen alpha-1(XVII) chain</fullName>
    </recommendedName>
    <alternativeName>
        <fullName>180 kDa bullous pemphigoid antigen 2</fullName>
    </alternativeName>
    <alternativeName>
        <fullName>Bullous pemphigoid antigen 2</fullName>
    </alternativeName>
    <component>
        <recommendedName>
            <fullName>120 kDa linear IgA disease antigen homolog</fullName>
        </recommendedName>
    </component>
</protein>
<feature type="chain" id="PRO_0000059408" description="Collagen alpha-1(XVII) chain">
    <location>
        <begin position="1"/>
        <end position="1470"/>
    </location>
</feature>
<feature type="chain" id="PRO_0000342558" description="120 kDa linear IgA disease antigen homolog" evidence="1">
    <location>
        <begin position="531"/>
        <end position="1470"/>
    </location>
</feature>
<feature type="topological domain" description="Cytoplasmic" evidence="3">
    <location>
        <begin position="1"/>
        <end position="476"/>
    </location>
</feature>
<feature type="transmembrane region" description="Helical; Signal-anchor for type II membrane protein" evidence="3">
    <location>
        <begin position="477"/>
        <end position="497"/>
    </location>
</feature>
<feature type="topological domain" description="Extracellular" evidence="3">
    <location>
        <begin position="498"/>
        <end position="1470"/>
    </location>
</feature>
<feature type="region of interest" description="Nonhelical region (NC16)">
    <location>
        <begin position="1"/>
        <end position="573"/>
    </location>
</feature>
<feature type="region of interest" description="Disordered" evidence="4">
    <location>
        <begin position="1"/>
        <end position="155"/>
    </location>
</feature>
<feature type="region of interest" description="Necessary for interaction with DST and for the recruitment of DST to hemidesmosome" evidence="1">
    <location>
        <begin position="146"/>
        <end position="231"/>
    </location>
</feature>
<feature type="region of interest" description="Disordered" evidence="4">
    <location>
        <begin position="167"/>
        <end position="193"/>
    </location>
</feature>
<feature type="region of interest" description="Disordered" evidence="4">
    <location>
        <begin position="422"/>
        <end position="452"/>
    </location>
</feature>
<feature type="region of interest" description="Disordered" evidence="4">
    <location>
        <begin position="568"/>
        <end position="873"/>
    </location>
</feature>
<feature type="region of interest" description="Triple-helical region">
    <location>
        <begin position="574"/>
        <end position="1456"/>
    </location>
</feature>
<feature type="region of interest" description="Disordered" evidence="4">
    <location>
        <begin position="885"/>
        <end position="999"/>
    </location>
</feature>
<feature type="region of interest" description="Disordered" evidence="4">
    <location>
        <begin position="1159"/>
        <end position="1181"/>
    </location>
</feature>
<feature type="region of interest" description="Disordered" evidence="4">
    <location>
        <begin position="1194"/>
        <end position="1220"/>
    </location>
</feature>
<feature type="region of interest" description="Disordered" evidence="4">
    <location>
        <begin position="1249"/>
        <end position="1298"/>
    </location>
</feature>
<feature type="region of interest" description="Disordered" evidence="4">
    <location>
        <begin position="1406"/>
        <end position="1470"/>
    </location>
</feature>
<feature type="region of interest" description="Nonhelical region (NC1)">
    <location>
        <begin position="1457"/>
        <end position="1470"/>
    </location>
</feature>
<feature type="compositionally biased region" description="Basic and acidic residues" evidence="4">
    <location>
        <begin position="9"/>
        <end position="19"/>
    </location>
</feature>
<feature type="compositionally biased region" description="Low complexity" evidence="4">
    <location>
        <begin position="60"/>
        <end position="74"/>
    </location>
</feature>
<feature type="compositionally biased region" description="Polar residues" evidence="4">
    <location>
        <begin position="75"/>
        <end position="96"/>
    </location>
</feature>
<feature type="compositionally biased region" description="Polar residues" evidence="4">
    <location>
        <begin position="111"/>
        <end position="120"/>
    </location>
</feature>
<feature type="compositionally biased region" description="Polar residues" evidence="4">
    <location>
        <begin position="170"/>
        <end position="184"/>
    </location>
</feature>
<feature type="compositionally biased region" description="Gly residues" evidence="4">
    <location>
        <begin position="430"/>
        <end position="452"/>
    </location>
</feature>
<feature type="compositionally biased region" description="Pro residues" evidence="4">
    <location>
        <begin position="597"/>
        <end position="609"/>
    </location>
</feature>
<feature type="compositionally biased region" description="Low complexity" evidence="4">
    <location>
        <begin position="742"/>
        <end position="755"/>
    </location>
</feature>
<feature type="compositionally biased region" description="Low complexity" evidence="4">
    <location>
        <begin position="781"/>
        <end position="803"/>
    </location>
</feature>
<feature type="compositionally biased region" description="Pro residues" evidence="4">
    <location>
        <begin position="827"/>
        <end position="848"/>
    </location>
</feature>
<feature type="compositionally biased region" description="Low complexity" evidence="4">
    <location>
        <begin position="850"/>
        <end position="873"/>
    </location>
</feature>
<feature type="compositionally biased region" description="Pro residues" evidence="4">
    <location>
        <begin position="891"/>
        <end position="914"/>
    </location>
</feature>
<feature type="compositionally biased region" description="Pro residues" evidence="4">
    <location>
        <begin position="940"/>
        <end position="949"/>
    </location>
</feature>
<feature type="compositionally biased region" description="Pro residues" evidence="4">
    <location>
        <begin position="982"/>
        <end position="992"/>
    </location>
</feature>
<feature type="compositionally biased region" description="Pro residues" evidence="4">
    <location>
        <begin position="1166"/>
        <end position="1175"/>
    </location>
</feature>
<feature type="compositionally biased region" description="Pro residues" evidence="4">
    <location>
        <begin position="1201"/>
        <end position="1215"/>
    </location>
</feature>
<feature type="compositionally biased region" description="Pro residues" evidence="4">
    <location>
        <begin position="1253"/>
        <end position="1262"/>
    </location>
</feature>
<feature type="compositionally biased region" description="Low complexity" evidence="4">
    <location>
        <begin position="1275"/>
        <end position="1290"/>
    </location>
</feature>
<feature type="compositionally biased region" description="Pro residues" evidence="4">
    <location>
        <begin position="1434"/>
        <end position="1443"/>
    </location>
</feature>
<feature type="compositionally biased region" description="Basic and acidic residues" evidence="4">
    <location>
        <begin position="1446"/>
        <end position="1455"/>
    </location>
</feature>
<feature type="compositionally biased region" description="Basic residues" evidence="4">
    <location>
        <begin position="1460"/>
        <end position="1470"/>
    </location>
</feature>
<feature type="modified residue" description="Phosphoserine; by CK2" evidence="2">
    <location>
        <position position="551"/>
    </location>
</feature>
<feature type="glycosylation site" description="N-linked (GlcNAc...) asparagine" evidence="3">
    <location>
        <position position="1273"/>
    </location>
</feature>
<feature type="glycosylation site" description="N-linked (GlcNAc...) asparagine" evidence="3">
    <location>
        <position position="1395"/>
    </location>
</feature>
<feature type="splice variant" id="VSP_009362" description="In isoform 2." evidence="5">
    <original>GSDYRNIIGPPGPPGPPGMPGNAWSSISVEDLSSYLHT</original>
    <variation>A</variation>
    <location>
        <begin position="1157"/>
        <end position="1194"/>
    </location>
</feature>
<feature type="sequence conflict" description="In Ref. 1; AAA37443." evidence="6" ref="1">
    <original>R</original>
    <variation>S</variation>
    <location>
        <position position="164"/>
    </location>
</feature>
<feature type="sequence conflict" description="In Ref. 1; AAA37443." evidence="6" ref="1">
    <original>A</original>
    <variation>G</variation>
    <location>
        <position position="289"/>
    </location>
</feature>
<feature type="sequence conflict" description="In Ref. 1; AAA37443." evidence="6" ref="1">
    <original>S</original>
    <variation>C</variation>
    <location>
        <position position="324"/>
    </location>
</feature>
<feature type="sequence conflict" description="In Ref. 3; AAH03208." evidence="6" ref="3">
    <original>S</original>
    <variation>G</variation>
    <location>
        <position position="1275"/>
    </location>
</feature>
<feature type="sequence conflict" description="In Ref. 1; AAA37443 and 3; AAH03208/AAI25032/AAI25033." evidence="6" ref="1 3">
    <original>N</original>
    <variation>S</variation>
    <location>
        <position position="1277"/>
    </location>
</feature>
<feature type="sequence conflict" description="In Ref. 1; AAA37443 and 3; AAH03208/AAI25032/AAI25033." evidence="6" ref="1 3">
    <original>T</original>
    <variation>I</variation>
    <location>
        <position position="1292"/>
    </location>
</feature>
<feature type="sequence conflict" description="In Ref. 1; AAA37443." evidence="6" ref="1">
    <original>R</original>
    <variation>W</variation>
    <location>
        <position position="1388"/>
    </location>
</feature>